<feature type="chain" id="PRO_0000080271" description="Alpha-1,3/1,6-mannosyltransferase ALG2">
    <location>
        <begin position="1"/>
        <end position="503"/>
    </location>
</feature>
<feature type="transmembrane region" description="Helical" evidence="1">
    <location>
        <begin position="64"/>
        <end position="84"/>
    </location>
</feature>
<feature type="transmembrane region" description="Helical" evidence="1">
    <location>
        <begin position="112"/>
        <end position="132"/>
    </location>
</feature>
<feature type="transmembrane region" description="Helical" evidence="1">
    <location>
        <begin position="443"/>
        <end position="463"/>
    </location>
</feature>
<feature type="glycosylation site" description="N-linked (GlcNAc...) asparagine" evidence="1">
    <location>
        <position position="170"/>
    </location>
</feature>
<feature type="glycosylation site" description="N-linked (GlcNAc...) asparagine" evidence="1">
    <location>
        <position position="303"/>
    </location>
</feature>
<feature type="glycosylation site" description="N-linked (GlcNAc...) asparagine" evidence="1">
    <location>
        <position position="371"/>
    </location>
</feature>
<feature type="glycosylation site" description="N-linked (GlcNAc...) asparagine" evidence="1">
    <location>
        <position position="400"/>
    </location>
</feature>
<feature type="mutagenesis site" description="Severely affects activity, especially the second mannosylation step." evidence="4">
    <original>E</original>
    <variation>A</variation>
    <location>
        <position position="335"/>
    </location>
</feature>
<feature type="mutagenesis site" description="No activity." evidence="4">
    <original>E</original>
    <variation>A</variation>
    <location>
        <position position="343"/>
    </location>
</feature>
<feature type="sequence conflict" description="In Ref. 1; CAA61199." evidence="6" ref="1">
    <original>T</original>
    <variation>S</variation>
    <location>
        <position position="8"/>
    </location>
</feature>
<feature type="sequence conflict" description="In Ref. 1; CAA61199." evidence="6" ref="1">
    <original>KA</original>
    <variation>NG</variation>
    <location>
        <begin position="237"/>
        <end position="238"/>
    </location>
</feature>
<feature type="sequence conflict" description="In Ref. 1; CAA61199." evidence="6" ref="1">
    <original>T</original>
    <variation>A</variation>
    <location>
        <position position="302"/>
    </location>
</feature>
<feature type="sequence conflict" description="In Ref. 1; CAA61199." evidence="6" ref="1">
    <original>M</original>
    <variation>I</variation>
    <location>
        <position position="457"/>
    </location>
</feature>
<feature type="sequence conflict" description="In Ref. 1." evidence="6" ref="1">
    <original>FLFMATFMVLYFKNYLWGIYWAFVFALSYPYEEI</original>
    <variation>SYLWPLLWYYILRTTYGEFTGHLYSLSPTLMKKYNVYLNKQCIPPEEKIIYIGEEISKCK</variation>
    <location>
        <begin position="470"/>
        <end position="503"/>
    </location>
</feature>
<protein>
    <recommendedName>
        <fullName>Alpha-1,3/1,6-mannosyltransferase ALG2</fullName>
        <ecNumber evidence="4 5">2.4.1.132</ecNumber>
        <ecNumber evidence="4 5">2.4.1.257</ecNumber>
    </recommendedName>
    <alternativeName>
        <fullName>Asparagine-linked glycosylation protein 2</fullName>
    </alternativeName>
    <alternativeName>
        <fullName>GDP-Man:Man(1)GlcNAc(2)-PP-Dol alpha-1,3-mannosyltransferase</fullName>
    </alternativeName>
    <alternativeName>
        <fullName>GDP-Man:Man(1)GlcNAc(2)-PP-dolichol mannosyltransferase</fullName>
    </alternativeName>
    <alternativeName>
        <fullName>GDP-Man:Man(2)GlcNAc(2)-PP-Dol alpha-1,6-mannosyltransferase</fullName>
    </alternativeName>
</protein>
<keyword id="KW-0256">Endoplasmic reticulum</keyword>
<keyword id="KW-0325">Glycoprotein</keyword>
<keyword id="KW-0328">Glycosyltransferase</keyword>
<keyword id="KW-0472">Membrane</keyword>
<keyword id="KW-1185">Reference proteome</keyword>
<keyword id="KW-0808">Transferase</keyword>
<keyword id="KW-0812">Transmembrane</keyword>
<keyword id="KW-1133">Transmembrane helix</keyword>
<accession>P43636</accession>
<accession>D6VU76</accession>
<evidence type="ECO:0000255" key="1"/>
<evidence type="ECO:0000269" key="2">
    <source>
    </source>
</evidence>
<evidence type="ECO:0000269" key="3">
    <source>
    </source>
</evidence>
<evidence type="ECO:0000269" key="4">
    <source>
    </source>
</evidence>
<evidence type="ECO:0000269" key="5">
    <source>
    </source>
</evidence>
<evidence type="ECO:0000305" key="6"/>
<evidence type="ECO:0000305" key="7">
    <source>
    </source>
</evidence>
<dbReference type="EC" id="2.4.1.132" evidence="4 5"/>
<dbReference type="EC" id="2.4.1.257" evidence="4 5"/>
<dbReference type="EMBL" id="X87947">
    <property type="protein sequence ID" value="CAA61199.1"/>
    <property type="molecule type" value="Genomic_DNA"/>
</dbReference>
<dbReference type="EMBL" id="Z72587">
    <property type="protein sequence ID" value="CAA96768.1"/>
    <property type="molecule type" value="Genomic_DNA"/>
</dbReference>
<dbReference type="EMBL" id="BK006941">
    <property type="protein sequence ID" value="DAA08037.1"/>
    <property type="molecule type" value="Genomic_DNA"/>
</dbReference>
<dbReference type="PIR" id="S64069">
    <property type="entry name" value="S64069"/>
</dbReference>
<dbReference type="RefSeq" id="NP_011450.1">
    <property type="nucleotide sequence ID" value="NM_001180930.1"/>
</dbReference>
<dbReference type="SMR" id="P43636"/>
<dbReference type="BioGRID" id="33182">
    <property type="interactions" value="261"/>
</dbReference>
<dbReference type="DIP" id="DIP-5401N"/>
<dbReference type="FunCoup" id="P43636">
    <property type="interactions" value="826"/>
</dbReference>
<dbReference type="IntAct" id="P43636">
    <property type="interactions" value="28"/>
</dbReference>
<dbReference type="STRING" id="4932.YGL065C"/>
<dbReference type="CAZy" id="GT4">
    <property type="family name" value="Glycosyltransferase Family 4"/>
</dbReference>
<dbReference type="GlyCosmos" id="P43636">
    <property type="glycosylation" value="4 sites, No reported glycans"/>
</dbReference>
<dbReference type="GlyGen" id="P43636">
    <property type="glycosylation" value="4 sites"/>
</dbReference>
<dbReference type="iPTMnet" id="P43636"/>
<dbReference type="PaxDb" id="4932-YGL065C"/>
<dbReference type="PeptideAtlas" id="P43636"/>
<dbReference type="EnsemblFungi" id="YGL065C_mRNA">
    <property type="protein sequence ID" value="YGL065C"/>
    <property type="gene ID" value="YGL065C"/>
</dbReference>
<dbReference type="GeneID" id="852815"/>
<dbReference type="KEGG" id="sce:YGL065C"/>
<dbReference type="AGR" id="SGD:S000003033"/>
<dbReference type="SGD" id="S000003033">
    <property type="gene designation" value="ALG2"/>
</dbReference>
<dbReference type="VEuPathDB" id="FungiDB:YGL065C"/>
<dbReference type="eggNOG" id="KOG0853">
    <property type="taxonomic scope" value="Eukaryota"/>
</dbReference>
<dbReference type="GeneTree" id="ENSGT00550000075033"/>
<dbReference type="HOGENOM" id="CLU_030619_1_0_1"/>
<dbReference type="InParanoid" id="P43636"/>
<dbReference type="OMA" id="AMYMKCP"/>
<dbReference type="OrthoDB" id="448893at2759"/>
<dbReference type="BioCyc" id="MetaCyc:YGL065C-MONOMER"/>
<dbReference type="BioCyc" id="YEAST:YGL065C-MONOMER"/>
<dbReference type="BRENDA" id="2.4.1.132">
    <property type="organism ID" value="984"/>
</dbReference>
<dbReference type="BRENDA" id="2.4.1.257">
    <property type="organism ID" value="984"/>
</dbReference>
<dbReference type="Reactome" id="R-SCE-446193">
    <property type="pathway name" value="Biosynthesis of the N-glycan precursor (dolichol lipid-linked oligosaccharide, LLO) and transfer to a nascent protein"/>
</dbReference>
<dbReference type="UniPathway" id="UPA00378"/>
<dbReference type="BioGRID-ORCS" id="852815">
    <property type="hits" value="2 hits in 10 CRISPR screens"/>
</dbReference>
<dbReference type="PRO" id="PR:P43636"/>
<dbReference type="Proteomes" id="UP000002311">
    <property type="component" value="Chromosome VII"/>
</dbReference>
<dbReference type="RNAct" id="P43636">
    <property type="molecule type" value="protein"/>
</dbReference>
<dbReference type="GO" id="GO:0012505">
    <property type="term" value="C:endomembrane system"/>
    <property type="evidence" value="ECO:0000318"/>
    <property type="project" value="GO_Central"/>
</dbReference>
<dbReference type="GO" id="GO:0005783">
    <property type="term" value="C:endoplasmic reticulum"/>
    <property type="evidence" value="ECO:0007005"/>
    <property type="project" value="SGD"/>
</dbReference>
<dbReference type="GO" id="GO:0005789">
    <property type="term" value="C:endoplasmic reticulum membrane"/>
    <property type="evidence" value="ECO:0000304"/>
    <property type="project" value="Reactome"/>
</dbReference>
<dbReference type="GO" id="GO:0000033">
    <property type="term" value="F:alpha-1,3-mannosyltransferase activity"/>
    <property type="evidence" value="ECO:0000318"/>
    <property type="project" value="GO_Central"/>
</dbReference>
<dbReference type="GO" id="GO:0000009">
    <property type="term" value="F:alpha-1,6-mannosyltransferase activity"/>
    <property type="evidence" value="ECO:0000304"/>
    <property type="project" value="Reactome"/>
</dbReference>
<dbReference type="GO" id="GO:0004378">
    <property type="term" value="F:GDP-Man:Man1GlcNAc2-PP-Dol alpha-1,3-mannosyltransferase activity"/>
    <property type="evidence" value="ECO:0000314"/>
    <property type="project" value="UniProtKB"/>
</dbReference>
<dbReference type="GO" id="GO:0102704">
    <property type="term" value="F:GDP-Man:Man2GlcNAc2-PP-dolichol alpha-1,6-mannosyltransferase activity"/>
    <property type="evidence" value="ECO:0000314"/>
    <property type="project" value="UniProtKB"/>
</dbReference>
<dbReference type="GO" id="GO:0033164">
    <property type="term" value="F:glycolipid 1,6-alpha-mannosyltransferase activity"/>
    <property type="evidence" value="ECO:0000314"/>
    <property type="project" value="SGD"/>
</dbReference>
<dbReference type="GO" id="GO:0006488">
    <property type="term" value="P:dolichol-linked oligosaccharide biosynthetic process"/>
    <property type="evidence" value="ECO:0000314"/>
    <property type="project" value="UniProtKB"/>
</dbReference>
<dbReference type="CDD" id="cd03805">
    <property type="entry name" value="GT4_ALG2-like"/>
    <property type="match status" value="1"/>
</dbReference>
<dbReference type="FunFam" id="3.40.50.2000:FF:000240">
    <property type="entry name" value="Alpha-1,2-mannosyltransferase (Alg2)"/>
    <property type="match status" value="1"/>
</dbReference>
<dbReference type="FunFam" id="3.40.50.2000:FF:000222">
    <property type="entry name" value="Alpha-1,3-mannosyltransferase ALG2"/>
    <property type="match status" value="1"/>
</dbReference>
<dbReference type="Gene3D" id="3.40.50.2000">
    <property type="entry name" value="Glycogen Phosphorylase B"/>
    <property type="match status" value="2"/>
</dbReference>
<dbReference type="InterPro" id="IPR027054">
    <property type="entry name" value="ALG2"/>
</dbReference>
<dbReference type="InterPro" id="IPR001296">
    <property type="entry name" value="Glyco_trans_1"/>
</dbReference>
<dbReference type="InterPro" id="IPR028098">
    <property type="entry name" value="Glyco_trans_4-like_N"/>
</dbReference>
<dbReference type="PANTHER" id="PTHR45918">
    <property type="entry name" value="ALPHA-1,3/1,6-MANNOSYLTRANSFERASE ALG2"/>
    <property type="match status" value="1"/>
</dbReference>
<dbReference type="PANTHER" id="PTHR45918:SF1">
    <property type="entry name" value="ALPHA-1,3_1,6-MANNOSYLTRANSFERASE ALG2"/>
    <property type="match status" value="1"/>
</dbReference>
<dbReference type="Pfam" id="PF13439">
    <property type="entry name" value="Glyco_transf_4"/>
    <property type="match status" value="1"/>
</dbReference>
<dbReference type="Pfam" id="PF00534">
    <property type="entry name" value="Glycos_transf_1"/>
    <property type="match status" value="1"/>
</dbReference>
<dbReference type="SUPFAM" id="SSF53756">
    <property type="entry name" value="UDP-Glycosyltransferase/glycogen phosphorylase"/>
    <property type="match status" value="1"/>
</dbReference>
<sequence length="503" mass="58047">MIEKDKRTIAFIHPDLGIGGAERLVVDAALGLQQQGHSVIIYTSHCDKSHCFEEVKNGQLKVEVYGDFLPTNFLGRFFIVFATIRQLYLVIQLILQKKVNAYQLIIIDQLSTCIPLLHIFSSATLMFYCHFPDQLLAQRAGLLKKIYRLPFDLIEQFSVSAADTVVVNSNFTKNTFHQTFKYLSNDPDVIYPCVDLSTIEIEDIDKKFFKTVFNEGDRFYLSINRFEKKKDVALAIKAFALSEDQINDNVKLVICGGYDERVAENVEYLKELQSLADEYELSHTTIYYQEIKRVSDLESFKTNNSKIIFLTSISSSLKELLLERTEMLLYTPAYEHFGIVPLEAMKLGKPVLAVNNGGPLETIKSYVAGENESSATGWLKPAVPIQWATAIDESRKILQNGSVNFERNGPLRVKKYFSREAMTQSFEENVEKVIWKEKKYYPWEIFGISFSNFILHMAFIKILPNNPWPFLFMATFMVLYFKNYLWGIYWAFVFALSYPYEEI</sequence>
<gene>
    <name type="primary">ALG2</name>
    <name type="ordered locus">YGL065C</name>
</gene>
<reference key="1">
    <citation type="journal article" date="1993" name="Glycobiology">
        <title>Biosynthesis of asparagine-linked oligosaccharides in Saccharomyces cerevisiae: the alg2 mutation.</title>
        <authorList>
            <person name="Jackson B.J."/>
            <person name="Kukuruzinska M.A."/>
            <person name="Robbins P."/>
        </authorList>
    </citation>
    <scope>NUCLEOTIDE SEQUENCE [GENOMIC DNA]</scope>
</reference>
<reference key="2">
    <citation type="journal article" date="1997" name="Yeast">
        <title>Sequence analysis of 203 kilobases from Saccharomyces cerevisiae chromosome VII.</title>
        <authorList>
            <person name="Rieger M."/>
            <person name="Brueckner M."/>
            <person name="Schaefer M."/>
            <person name="Mueller-Auer S."/>
        </authorList>
    </citation>
    <scope>NUCLEOTIDE SEQUENCE [GENOMIC DNA]</scope>
    <source>
        <strain>ATCC 204508 / S288c</strain>
    </source>
</reference>
<reference key="3">
    <citation type="journal article" date="1997" name="Yeast">
        <title>The characterization of two new clusters of duplicated genes suggests a 'Lego' organization of the yeast Saccharomyces cerevisiae chromosomes.</title>
        <authorList>
            <person name="Feuermann M."/>
            <person name="de Montigny J."/>
            <person name="Potier S."/>
            <person name="Souciet J.-L."/>
        </authorList>
    </citation>
    <scope>NUCLEOTIDE SEQUENCE [GENOMIC DNA]</scope>
    <source>
        <strain>ATCC 204508 / S288c</strain>
    </source>
</reference>
<reference key="4">
    <citation type="journal article" date="1997" name="Nature">
        <title>The nucleotide sequence of Saccharomyces cerevisiae chromosome VII.</title>
        <authorList>
            <person name="Tettelin H."/>
            <person name="Agostoni-Carbone M.L."/>
            <person name="Albermann K."/>
            <person name="Albers M."/>
            <person name="Arroyo J."/>
            <person name="Backes U."/>
            <person name="Barreiros T."/>
            <person name="Bertani I."/>
            <person name="Bjourson A.J."/>
            <person name="Brueckner M."/>
            <person name="Bruschi C.V."/>
            <person name="Carignani G."/>
            <person name="Castagnoli L."/>
            <person name="Cerdan E."/>
            <person name="Clemente M.L."/>
            <person name="Coblenz A."/>
            <person name="Coglievina M."/>
            <person name="Coissac E."/>
            <person name="Defoor E."/>
            <person name="Del Bino S."/>
            <person name="Delius H."/>
            <person name="Delneri D."/>
            <person name="de Wergifosse P."/>
            <person name="Dujon B."/>
            <person name="Durand P."/>
            <person name="Entian K.-D."/>
            <person name="Eraso P."/>
            <person name="Escribano V."/>
            <person name="Fabiani L."/>
            <person name="Fartmann B."/>
            <person name="Feroli F."/>
            <person name="Feuermann M."/>
            <person name="Frontali L."/>
            <person name="Garcia-Gonzalez M."/>
            <person name="Garcia-Saez M.I."/>
            <person name="Goffeau A."/>
            <person name="Guerreiro P."/>
            <person name="Hani J."/>
            <person name="Hansen M."/>
            <person name="Hebling U."/>
            <person name="Hernandez K."/>
            <person name="Heumann K."/>
            <person name="Hilger F."/>
            <person name="Hofmann B."/>
            <person name="Indge K.J."/>
            <person name="James C.M."/>
            <person name="Klima R."/>
            <person name="Koetter P."/>
            <person name="Kramer B."/>
            <person name="Kramer W."/>
            <person name="Lauquin G."/>
            <person name="Leuther H."/>
            <person name="Louis E.J."/>
            <person name="Maillier E."/>
            <person name="Marconi A."/>
            <person name="Martegani E."/>
            <person name="Mazon M.J."/>
            <person name="Mazzoni C."/>
            <person name="McReynolds A.D.K."/>
            <person name="Melchioretto P."/>
            <person name="Mewes H.-W."/>
            <person name="Minenkova O."/>
            <person name="Mueller-Auer S."/>
            <person name="Nawrocki A."/>
            <person name="Netter P."/>
            <person name="Neu R."/>
            <person name="Nombela C."/>
            <person name="Oliver S.G."/>
            <person name="Panzeri L."/>
            <person name="Paoluzi S."/>
            <person name="Plevani P."/>
            <person name="Portetelle D."/>
            <person name="Portillo F."/>
            <person name="Potier S."/>
            <person name="Purnelle B."/>
            <person name="Rieger M."/>
            <person name="Riles L."/>
            <person name="Rinaldi T."/>
            <person name="Robben J."/>
            <person name="Rodrigues-Pousada C."/>
            <person name="Rodriguez-Belmonte E."/>
            <person name="Rodriguez-Torres A.M."/>
            <person name="Rose M."/>
            <person name="Ruzzi M."/>
            <person name="Saliola M."/>
            <person name="Sanchez-Perez M."/>
            <person name="Schaefer B."/>
            <person name="Schaefer M."/>
            <person name="Scharfe M."/>
            <person name="Schmidheini T."/>
            <person name="Schreer A."/>
            <person name="Skala J."/>
            <person name="Souciet J.-L."/>
            <person name="Steensma H.Y."/>
            <person name="Talla E."/>
            <person name="Thierry A."/>
            <person name="Vandenbol M."/>
            <person name="van der Aart Q.J.M."/>
            <person name="Van Dyck L."/>
            <person name="Vanoni M."/>
            <person name="Verhasselt P."/>
            <person name="Voet M."/>
            <person name="Volckaert G."/>
            <person name="Wambutt R."/>
            <person name="Watson M.D."/>
            <person name="Weber N."/>
            <person name="Wedler E."/>
            <person name="Wedler H."/>
            <person name="Wipfli P."/>
            <person name="Wolf K."/>
            <person name="Wright L.F."/>
            <person name="Zaccaria P."/>
            <person name="Zimmermann M."/>
            <person name="Zollner A."/>
            <person name="Kleine K."/>
        </authorList>
    </citation>
    <scope>NUCLEOTIDE SEQUENCE [LARGE SCALE GENOMIC DNA]</scope>
    <source>
        <strain>ATCC 204508 / S288c</strain>
    </source>
</reference>
<reference key="5">
    <citation type="journal article" date="2014" name="G3 (Bethesda)">
        <title>The reference genome sequence of Saccharomyces cerevisiae: Then and now.</title>
        <authorList>
            <person name="Engel S.R."/>
            <person name="Dietrich F.S."/>
            <person name="Fisk D.G."/>
            <person name="Binkley G."/>
            <person name="Balakrishnan R."/>
            <person name="Costanzo M.C."/>
            <person name="Dwight S.S."/>
            <person name="Hitz B.C."/>
            <person name="Karra K."/>
            <person name="Nash R.S."/>
            <person name="Weng S."/>
            <person name="Wong E.D."/>
            <person name="Lloyd P."/>
            <person name="Skrzypek M.S."/>
            <person name="Miyasato S.R."/>
            <person name="Simison M."/>
            <person name="Cherry J.M."/>
        </authorList>
    </citation>
    <scope>GENOME REANNOTATION</scope>
    <source>
        <strain>ATCC 204508 / S288c</strain>
    </source>
</reference>
<reference key="6">
    <citation type="journal article" date="2006" name="Biochemistry">
        <title>In vitro evidence for the dual function of Alg2 and Alg11: essential mannosyltransferases in N-linked glycoprotein biosynthesis.</title>
        <authorList>
            <person name="O'Reilly M.K."/>
            <person name="Zhang G."/>
            <person name="Imperiali B."/>
        </authorList>
    </citation>
    <scope>FUNCTION</scope>
    <scope>CATALYTIC ACTIVITY</scope>
    <scope>PATHWAY</scope>
    <scope>SUBSTRATE SPECIFICITY</scope>
    <scope>MUTAGENESIS OF GLU-335 AND GLU-343</scope>
</reference>
<reference key="7">
    <citation type="journal article" date="2003" name="Nature">
        <title>Global analysis of protein expression in yeast.</title>
        <authorList>
            <person name="Ghaemmaghami S."/>
            <person name="Huh W.-K."/>
            <person name="Bower K."/>
            <person name="Howson R.W."/>
            <person name="Belle A."/>
            <person name="Dephoure N."/>
            <person name="O'Shea E.K."/>
            <person name="Weissman J.S."/>
        </authorList>
    </citation>
    <scope>LEVEL OF PROTEIN EXPRESSION [LARGE SCALE ANALYSIS]</scope>
</reference>
<reference key="8">
    <citation type="journal article" date="2004" name="Glycobiology">
        <title>Physical interactions between the Alg1, Alg2, and Alg11 mannosyltransferases of the endoplasmic reticulum.</title>
        <authorList>
            <person name="Gao X.-D."/>
            <person name="Nishikawa A."/>
            <person name="Dean N."/>
        </authorList>
    </citation>
    <scope>INTERACTION WITH ALG1</scope>
    <scope>SUBCELLULAR LOCATION</scope>
</reference>
<reference key="9">
    <citation type="journal article" date="2003" name="J. Biol. Chem.">
        <title>A new type of congenital disorders of glycosylation (CDG-Ii) provides new insights into the early steps of dolichol-linked oligosaccharide biosynthesis.</title>
        <authorList>
            <person name="Thiel C."/>
            <person name="Schwarz M."/>
            <person name="Peng J."/>
            <person name="Grzmil M."/>
            <person name="Hasilik M."/>
            <person name="Braulke T."/>
            <person name="Kohlschuetter A."/>
            <person name="von Figura K."/>
            <person name="Lehle L."/>
            <person name="Koerner C."/>
        </authorList>
    </citation>
    <scope>CHARACTERIZATION</scope>
</reference>
<reference key="10">
    <citation type="journal article" date="2022" name="Commun. Biol.">
        <title>Topological and enzymatic analysis of human Alg2 mannosyltransferase reveals its role in lipid-linked oligosaccharide biosynthetic pathway.</title>
        <authorList>
            <person name="Xiang M.H."/>
            <person name="Xu X.X."/>
            <person name="Wang C.D."/>
            <person name="Chen S."/>
            <person name="Xu S."/>
            <person name="Xu X.Y."/>
            <person name="Dean N."/>
            <person name="Wang N."/>
            <person name="Gao X.D."/>
        </authorList>
    </citation>
    <scope>FUNCTION</scope>
    <scope>CATALYTIC ACTIVITY</scope>
</reference>
<organism>
    <name type="scientific">Saccharomyces cerevisiae (strain ATCC 204508 / S288c)</name>
    <name type="common">Baker's yeast</name>
    <dbReference type="NCBI Taxonomy" id="559292"/>
    <lineage>
        <taxon>Eukaryota</taxon>
        <taxon>Fungi</taxon>
        <taxon>Dikarya</taxon>
        <taxon>Ascomycota</taxon>
        <taxon>Saccharomycotina</taxon>
        <taxon>Saccharomycetes</taxon>
        <taxon>Saccharomycetales</taxon>
        <taxon>Saccharomycetaceae</taxon>
        <taxon>Saccharomyces</taxon>
    </lineage>
</organism>
<name>ALG2_YEAST</name>
<proteinExistence type="evidence at protein level"/>
<comment type="function">
    <text evidence="4 5">Mannosylates Man(2)GlcNAc(2)-dolichol diphosphate and Man(1)GlcNAc(2)-dolichol diphosphate to form Man(3)GlcNAc(2)-dolichol diphosphate.</text>
</comment>
<comment type="catalytic activity">
    <reaction evidence="4 5">
        <text>a beta-D-Man-(1-&gt;4)-beta-D-GlcNAc-(1-&gt;4)-alpha-D-GlcNAc-diphospho-di-trans,poly-cis-dolichol + GDP-alpha-D-mannose = an alpha-D-Man-(1-&gt;3)-beta-D-Man-(1-&gt;4)-beta-D-GlcNAc-(1-&gt;4)-alpha-D-GlcNAc-diphospho-di-trans,poly-cis-dolichol + GDP + H(+)</text>
        <dbReference type="Rhea" id="RHEA:29515"/>
        <dbReference type="Rhea" id="RHEA-COMP:19511"/>
        <dbReference type="Rhea" id="RHEA-COMP:19513"/>
        <dbReference type="ChEBI" id="CHEBI:15378"/>
        <dbReference type="ChEBI" id="CHEBI:57527"/>
        <dbReference type="ChEBI" id="CHEBI:58189"/>
        <dbReference type="ChEBI" id="CHEBI:58472"/>
        <dbReference type="ChEBI" id="CHEBI:132510"/>
        <dbReference type="EC" id="2.4.1.132"/>
    </reaction>
    <physiologicalReaction direction="left-to-right" evidence="7">
        <dbReference type="Rhea" id="RHEA:29516"/>
    </physiologicalReaction>
</comment>
<comment type="catalytic activity">
    <reaction evidence="4 5">
        <text>an alpha-D-Man-(1-&gt;3)-beta-D-Man-(1-&gt;4)-beta-D-GlcNAc-(1-&gt;4)-alpha-D-GlcNAc-diphospho-di-trans,poly-cis-dolichol + GDP-alpha-D-mannose = an alpha-D-Man-(1-&gt;3)-[alpha-D-Man-(1-&gt;6)]-beta-D-Man-(1-&gt;4)-beta-D-GlcNAc-(1-&gt;4)-alpha-D-GlcNAc-diphospho-di-trans,poly-cis-dolichol + GDP + H(+)</text>
        <dbReference type="Rhea" id="RHEA:29519"/>
        <dbReference type="Rhea" id="RHEA-COMP:19513"/>
        <dbReference type="Rhea" id="RHEA-COMP:19515"/>
        <dbReference type="ChEBI" id="CHEBI:15378"/>
        <dbReference type="ChEBI" id="CHEBI:57527"/>
        <dbReference type="ChEBI" id="CHEBI:58189"/>
        <dbReference type="ChEBI" id="CHEBI:132510"/>
        <dbReference type="ChEBI" id="CHEBI:132511"/>
        <dbReference type="EC" id="2.4.1.257"/>
    </reaction>
    <physiologicalReaction direction="left-to-right" evidence="7">
        <dbReference type="Rhea" id="RHEA:29520"/>
    </physiologicalReaction>
</comment>
<comment type="pathway">
    <text evidence="4">Protein modification; protein glycosylation.</text>
</comment>
<comment type="subunit">
    <text evidence="3">Interacts with ALG1.</text>
</comment>
<comment type="interaction">
    <interactant intactId="EBI-2459">
        <id>P43636</id>
    </interactant>
    <interactant intactId="EBI-2206309">
        <id>P16661</id>
        <label>ALG1</label>
    </interactant>
    <organismsDiffer>false</organismsDiffer>
    <experiments>2</experiments>
</comment>
<comment type="subcellular location">
    <subcellularLocation>
        <location evidence="3">Endoplasmic reticulum membrane</location>
        <topology evidence="3">Multi-pass membrane protein</topology>
    </subcellularLocation>
</comment>
<comment type="miscellaneous">
    <text evidence="2">Present with 1840 molecules/cell in log phase SD medium.</text>
</comment>
<comment type="similarity">
    <text evidence="6">Belongs to the glycosyltransferase group 1 family. Glycosyltransferase 4 subfamily.</text>
</comment>